<reference key="1">
    <citation type="journal article" date="2003" name="Proc. Natl. Acad. Sci. U.S.A.">
        <title>The complete genome sequence of Mycobacterium bovis.</title>
        <authorList>
            <person name="Garnier T."/>
            <person name="Eiglmeier K."/>
            <person name="Camus J.-C."/>
            <person name="Medina N."/>
            <person name="Mansoor H."/>
            <person name="Pryor M."/>
            <person name="Duthoy S."/>
            <person name="Grondin S."/>
            <person name="Lacroix C."/>
            <person name="Monsempe C."/>
            <person name="Simon S."/>
            <person name="Harris B."/>
            <person name="Atkin R."/>
            <person name="Doggett J."/>
            <person name="Mayes R."/>
            <person name="Keating L."/>
            <person name="Wheeler P.R."/>
            <person name="Parkhill J."/>
            <person name="Barrell B.G."/>
            <person name="Cole S.T."/>
            <person name="Gordon S.V."/>
            <person name="Hewinson R.G."/>
        </authorList>
    </citation>
    <scope>NUCLEOTIDE SEQUENCE [LARGE SCALE GENOMIC DNA]</scope>
    <source>
        <strain>ATCC BAA-935 / AF2122/97</strain>
    </source>
</reference>
<reference key="2">
    <citation type="journal article" date="2017" name="Genome Announc.">
        <title>Updated reference genome sequence and annotation of Mycobacterium bovis AF2122/97.</title>
        <authorList>
            <person name="Malone K.M."/>
            <person name="Farrell D."/>
            <person name="Stuber T.P."/>
            <person name="Schubert O.T."/>
            <person name="Aebersold R."/>
            <person name="Robbe-Austerman S."/>
            <person name="Gordon S.V."/>
        </authorList>
    </citation>
    <scope>NUCLEOTIDE SEQUENCE [LARGE SCALE GENOMIC DNA]</scope>
    <scope>GENOME REANNOTATION</scope>
    <source>
        <strain>ATCC BAA-935 / AF2122/97</strain>
    </source>
</reference>
<proteinExistence type="inferred from homology"/>
<organism>
    <name type="scientific">Mycobacterium bovis (strain ATCC BAA-935 / AF2122/97)</name>
    <dbReference type="NCBI Taxonomy" id="233413"/>
    <lineage>
        <taxon>Bacteria</taxon>
        <taxon>Bacillati</taxon>
        <taxon>Actinomycetota</taxon>
        <taxon>Actinomycetes</taxon>
        <taxon>Mycobacteriales</taxon>
        <taxon>Mycobacteriaceae</taxon>
        <taxon>Mycobacterium</taxon>
        <taxon>Mycobacterium tuberculosis complex</taxon>
    </lineage>
</organism>
<comment type="function">
    <text evidence="1">Part of the Sec protein translocase complex. Interacts with the SecYEG preprotein conducting channel. Has a central role in coupling the hydrolysis of ATP to the transfer of proteins into and across the cell membrane, serving as an ATP-driven molecular motor driving the stepwise translocation of polypeptide chains across the membrane.</text>
</comment>
<comment type="catalytic activity">
    <reaction evidence="1">
        <text>ATP + H2O + cellular proteinSide 1 = ADP + phosphate + cellular proteinSide 2.</text>
        <dbReference type="EC" id="7.4.2.8"/>
    </reaction>
</comment>
<comment type="subunit">
    <text evidence="1">Monomer and homodimer. Part of the essential Sec protein translocation apparatus which comprises SecA, SecYEG and auxiliary proteins SecDF. Other proteins may also be involved.</text>
</comment>
<comment type="subcellular location">
    <subcellularLocation>
        <location evidence="1">Cell membrane</location>
        <topology evidence="1">Peripheral membrane protein</topology>
        <orientation evidence="1">Cytoplasmic side</orientation>
    </subcellularLocation>
    <subcellularLocation>
        <location evidence="1">Cytoplasm</location>
    </subcellularLocation>
    <text evidence="1">Distribution is 50-50.</text>
</comment>
<comment type="similarity">
    <text evidence="1">Belongs to the SecA family.</text>
</comment>
<accession>P66786</accession>
<accession>A0A1R3XZG4</accession>
<accession>Q50612</accession>
<accession>X2BJ36</accession>
<sequence length="808" mass="88952">MNVHGCPRIAACRCTDTHPRGRPAFAYRWFVPKTTRAQPGRLSSRFWRLLGASTEKNRSRSLADVTASAEYDKEAADLSDEKLRKAAGLLNLDDLAESADIPQFLAIAREAAERRTGLRPFDVQLLGALRMLAGDVIEMATGEGKTLAGAIAAAGYALAGRHVHVVTINDYLARRDAEWMGPLLDAMGLTVGWITADSTPDERRTAYDRDVTYASVNEIGFDVLRDQLVTDVNDLVSPNPDVALIDEADSVLVDEALVPLVLAGTTHRETPRLEIIRLVAELVGDKDADEYFATDSDNRNVHLTEHGARKVEKALGGIDLYSEEHVGTTLTEVNVALHAHVLLQRDVHYIVRDDAVHLINASRGRIAQLQRWPDGLQAAVEAKEGIETTETGEVLDTITVQALINRYATVCGMTGTALAAGEQLRQFYQLGVSPIPPNKPNIREDEADRVYITTAAKNDGIVEHITEVHQRGQPVLVGTRDVAESEELHERLVRRGVPAVVLNAKNDAEEARVIAEAGKYGAVTVSTQMAGRGTDIRLGGSDEADHDRVAELGGLHVVGTGRHHTERLDNQLRGRAGRQGDPGSSVFFSSWEDDVVAANLDHNKLPMATDENGRIVSPRTGSLLDHAQRVAEGRLLDVHANTWRYNQLIAQQRAIIVERRNTLLRTVTAREELAELAPKRYEELSDKVSEERLETICRQIMLYHLDRGWADHLAYLADIRESIHLRALGRQNPLDEFHRMAVDAFASLAADAIEAAQQTFETANVLDHEPGLDLSKLARPTSTWTYMVNDNPLSDDTLSALSLPGVFR</sequence>
<feature type="chain" id="PRO_0000109592" description="Protein translocase subunit SecA 2">
    <location>
        <begin position="1"/>
        <end position="808"/>
    </location>
</feature>
<feature type="binding site" evidence="1">
    <location>
        <position position="124"/>
    </location>
    <ligand>
        <name>ATP</name>
        <dbReference type="ChEBI" id="CHEBI:30616"/>
    </ligand>
</feature>
<feature type="binding site" evidence="1">
    <location>
        <begin position="142"/>
        <end position="146"/>
    </location>
    <ligand>
        <name>ATP</name>
        <dbReference type="ChEBI" id="CHEBI:30616"/>
    </ligand>
</feature>
<feature type="binding site" evidence="1">
    <location>
        <position position="535"/>
    </location>
    <ligand>
        <name>ATP</name>
        <dbReference type="ChEBI" id="CHEBI:30616"/>
    </ligand>
</feature>
<protein>
    <recommendedName>
        <fullName evidence="1">Protein translocase subunit SecA 2</fullName>
        <ecNumber evidence="1">7.4.2.8</ecNumber>
    </recommendedName>
</protein>
<dbReference type="EC" id="7.4.2.8" evidence="1"/>
<dbReference type="EMBL" id="LT708304">
    <property type="protein sequence ID" value="SIU00456.1"/>
    <property type="molecule type" value="Genomic_DNA"/>
</dbReference>
<dbReference type="RefSeq" id="NP_855504.1">
    <property type="nucleotide sequence ID" value="NC_002945.3"/>
</dbReference>
<dbReference type="SMR" id="P66786"/>
<dbReference type="KEGG" id="mbo:BQ2027_MB1852"/>
<dbReference type="PATRIC" id="fig|233413.5.peg.2032"/>
<dbReference type="Proteomes" id="UP000001419">
    <property type="component" value="Chromosome"/>
</dbReference>
<dbReference type="GO" id="GO:0031522">
    <property type="term" value="C:cell envelope Sec protein transport complex"/>
    <property type="evidence" value="ECO:0007669"/>
    <property type="project" value="TreeGrafter"/>
</dbReference>
<dbReference type="GO" id="GO:0005829">
    <property type="term" value="C:cytosol"/>
    <property type="evidence" value="ECO:0007669"/>
    <property type="project" value="TreeGrafter"/>
</dbReference>
<dbReference type="GO" id="GO:0005886">
    <property type="term" value="C:plasma membrane"/>
    <property type="evidence" value="ECO:0007669"/>
    <property type="project" value="UniProtKB-SubCell"/>
</dbReference>
<dbReference type="GO" id="GO:0005524">
    <property type="term" value="F:ATP binding"/>
    <property type="evidence" value="ECO:0007669"/>
    <property type="project" value="UniProtKB-UniRule"/>
</dbReference>
<dbReference type="GO" id="GO:0008564">
    <property type="term" value="F:protein-exporting ATPase activity"/>
    <property type="evidence" value="ECO:0007669"/>
    <property type="project" value="UniProtKB-EC"/>
</dbReference>
<dbReference type="GO" id="GO:0065002">
    <property type="term" value="P:intracellular protein transmembrane transport"/>
    <property type="evidence" value="ECO:0007669"/>
    <property type="project" value="UniProtKB-UniRule"/>
</dbReference>
<dbReference type="GO" id="GO:0017038">
    <property type="term" value="P:protein import"/>
    <property type="evidence" value="ECO:0007669"/>
    <property type="project" value="InterPro"/>
</dbReference>
<dbReference type="GO" id="GO:0006605">
    <property type="term" value="P:protein targeting"/>
    <property type="evidence" value="ECO:0007669"/>
    <property type="project" value="UniProtKB-UniRule"/>
</dbReference>
<dbReference type="GO" id="GO:0043952">
    <property type="term" value="P:protein transport by the Sec complex"/>
    <property type="evidence" value="ECO:0007669"/>
    <property type="project" value="TreeGrafter"/>
</dbReference>
<dbReference type="CDD" id="cd17928">
    <property type="entry name" value="DEXDc_SecA"/>
    <property type="match status" value="1"/>
</dbReference>
<dbReference type="CDD" id="cd18803">
    <property type="entry name" value="SF2_C_secA"/>
    <property type="match status" value="1"/>
</dbReference>
<dbReference type="FunFam" id="3.40.50.300:FF:000429">
    <property type="entry name" value="Preprotein translocase subunit SecA"/>
    <property type="match status" value="1"/>
</dbReference>
<dbReference type="FunFam" id="1.10.3060.10:FF:000010">
    <property type="entry name" value="Protein translocase subunit SecA 2"/>
    <property type="match status" value="1"/>
</dbReference>
<dbReference type="Gene3D" id="1.10.3060.10">
    <property type="entry name" value="Helical scaffold and wing domains of SecA"/>
    <property type="match status" value="1"/>
</dbReference>
<dbReference type="Gene3D" id="3.40.50.300">
    <property type="entry name" value="P-loop containing nucleotide triphosphate hydrolases"/>
    <property type="match status" value="3"/>
</dbReference>
<dbReference type="Gene3D" id="3.90.1440.10">
    <property type="entry name" value="SecA, preprotein cross-linking domain"/>
    <property type="match status" value="1"/>
</dbReference>
<dbReference type="HAMAP" id="MF_01382">
    <property type="entry name" value="SecA"/>
    <property type="match status" value="1"/>
</dbReference>
<dbReference type="InterPro" id="IPR014001">
    <property type="entry name" value="Helicase_ATP-bd"/>
</dbReference>
<dbReference type="InterPro" id="IPR001650">
    <property type="entry name" value="Helicase_C-like"/>
</dbReference>
<dbReference type="InterPro" id="IPR027417">
    <property type="entry name" value="P-loop_NTPase"/>
</dbReference>
<dbReference type="InterPro" id="IPR000185">
    <property type="entry name" value="SecA"/>
</dbReference>
<dbReference type="InterPro" id="IPR026389">
    <property type="entry name" value="SecA_Actinobact-type"/>
</dbReference>
<dbReference type="InterPro" id="IPR020937">
    <property type="entry name" value="SecA_CS"/>
</dbReference>
<dbReference type="InterPro" id="IPR011115">
    <property type="entry name" value="SecA_DEAD"/>
</dbReference>
<dbReference type="InterPro" id="IPR014018">
    <property type="entry name" value="SecA_motor_DEAD"/>
</dbReference>
<dbReference type="InterPro" id="IPR011130">
    <property type="entry name" value="SecA_preprotein_X-link_dom"/>
</dbReference>
<dbReference type="InterPro" id="IPR044722">
    <property type="entry name" value="SecA_SF2_C"/>
</dbReference>
<dbReference type="InterPro" id="IPR011116">
    <property type="entry name" value="SecA_Wing/Scaffold"/>
</dbReference>
<dbReference type="InterPro" id="IPR036266">
    <property type="entry name" value="SecA_Wing/Scaffold_sf"/>
</dbReference>
<dbReference type="InterPro" id="IPR036670">
    <property type="entry name" value="SecA_X-link_sf"/>
</dbReference>
<dbReference type="NCBIfam" id="TIGR04221">
    <property type="entry name" value="SecA2_Mycobac"/>
    <property type="match status" value="1"/>
</dbReference>
<dbReference type="PANTHER" id="PTHR30612:SF0">
    <property type="entry name" value="CHLOROPLAST PROTEIN-TRANSPORTING ATPASE"/>
    <property type="match status" value="1"/>
</dbReference>
<dbReference type="PANTHER" id="PTHR30612">
    <property type="entry name" value="SECA INNER MEMBRANE COMPONENT OF SEC PROTEIN SECRETION SYSTEM"/>
    <property type="match status" value="1"/>
</dbReference>
<dbReference type="Pfam" id="PF21090">
    <property type="entry name" value="P-loop_SecA"/>
    <property type="match status" value="1"/>
</dbReference>
<dbReference type="Pfam" id="PF07517">
    <property type="entry name" value="SecA_DEAD"/>
    <property type="match status" value="1"/>
</dbReference>
<dbReference type="Pfam" id="PF01043">
    <property type="entry name" value="SecA_PP_bind"/>
    <property type="match status" value="1"/>
</dbReference>
<dbReference type="Pfam" id="PF07516">
    <property type="entry name" value="SecA_SW"/>
    <property type="match status" value="1"/>
</dbReference>
<dbReference type="PRINTS" id="PR00906">
    <property type="entry name" value="SECA"/>
</dbReference>
<dbReference type="SMART" id="SM00957">
    <property type="entry name" value="SecA_DEAD"/>
    <property type="match status" value="1"/>
</dbReference>
<dbReference type="SMART" id="SM00958">
    <property type="entry name" value="SecA_PP_bind"/>
    <property type="match status" value="1"/>
</dbReference>
<dbReference type="SUPFAM" id="SSF81886">
    <property type="entry name" value="Helical scaffold and wing domains of SecA"/>
    <property type="match status" value="1"/>
</dbReference>
<dbReference type="SUPFAM" id="SSF52540">
    <property type="entry name" value="P-loop containing nucleoside triphosphate hydrolases"/>
    <property type="match status" value="2"/>
</dbReference>
<dbReference type="SUPFAM" id="SSF81767">
    <property type="entry name" value="Pre-protein crosslinking domain of SecA"/>
    <property type="match status" value="1"/>
</dbReference>
<dbReference type="PROSITE" id="PS01312">
    <property type="entry name" value="SECA"/>
    <property type="match status" value="1"/>
</dbReference>
<dbReference type="PROSITE" id="PS51196">
    <property type="entry name" value="SECA_MOTOR_DEAD"/>
    <property type="match status" value="1"/>
</dbReference>
<keyword id="KW-0067">ATP-binding</keyword>
<keyword id="KW-1003">Cell membrane</keyword>
<keyword id="KW-0963">Cytoplasm</keyword>
<keyword id="KW-0472">Membrane</keyword>
<keyword id="KW-0547">Nucleotide-binding</keyword>
<keyword id="KW-0653">Protein transport</keyword>
<keyword id="KW-1185">Reference proteome</keyword>
<keyword id="KW-1278">Translocase</keyword>
<keyword id="KW-0811">Translocation</keyword>
<keyword id="KW-0813">Transport</keyword>
<evidence type="ECO:0000255" key="1">
    <source>
        <dbReference type="HAMAP-Rule" id="MF_01382"/>
    </source>
</evidence>
<name>SECA2_MYCBO</name>
<gene>
    <name evidence="1" type="primary">secA2</name>
    <name type="ordered locus">BQ2027_MB1852</name>
</gene>